<feature type="chain" id="PRO_1000044871" description="Chaperone protein HscA homolog">
    <location>
        <begin position="1"/>
        <end position="620"/>
    </location>
</feature>
<sequence length="620" mass="65850">MALLQIAEPGQSPQPHQRRLAVGIDLGTTNSLVAALRSGRSEPLPDAQGNVILPSAVRYLANGVEVGLGAREAAPSDPLNSILSVKRLMGRGLADVKQLGEQLPYRFVGGESHMPFIDTVQGPKSPVEVSADILKVLRQRAEDTLGGELVGAVITVPAYFDDAQRQATKDAAKLAGLNVLRLLNEPTAAAVAYGLDQHAEGVVAIFDLGGGTFDISILRLTAGVFEVLATGGDTALGGDDFDHAIAGWIIEQAGLSADLDPATQRLLLQTACAAKEALTDSEAVSVQHGAWQGELTRGAFEAMIEPMIARSLKACRRAVRDSGIELEEVGAVVMVGGSTRVPRVREAVGSLFGRTPLTSIDPDQVVAIGAAIQADTLAGNRREGGELLLLDVIPLSLGLETMGGLMEKVIPRNTTIPVARAQEFTTYKDGQSAMMIHVLQGERELISDCRSLARFELRGIPAMVAGAAKIRVTFQVDADGLLSVAARELGSGVESSIQVKPSYGLTDGEIARMLKDSFEHAGADKHARQLREHQVDAERLLEAVQGALDADGERLLSDDEREAIAFQMQELRDLLTGTDGAAIEQQTKRLSQVTDAFAARRLDSTVKAALAGRNLNEIEE</sequence>
<name>HSCA_PSEE4</name>
<evidence type="ECO:0000255" key="1">
    <source>
        <dbReference type="HAMAP-Rule" id="MF_00679"/>
    </source>
</evidence>
<proteinExistence type="inferred from homology"/>
<comment type="function">
    <text evidence="1">Chaperone involved in the maturation of iron-sulfur cluster-containing proteins. Has a low intrinsic ATPase activity which is markedly stimulated by HscB.</text>
</comment>
<comment type="similarity">
    <text evidence="1">Belongs to the heat shock protein 70 family.</text>
</comment>
<organism>
    <name type="scientific">Pseudomonas entomophila (strain L48)</name>
    <dbReference type="NCBI Taxonomy" id="384676"/>
    <lineage>
        <taxon>Bacteria</taxon>
        <taxon>Pseudomonadati</taxon>
        <taxon>Pseudomonadota</taxon>
        <taxon>Gammaproteobacteria</taxon>
        <taxon>Pseudomonadales</taxon>
        <taxon>Pseudomonadaceae</taxon>
        <taxon>Pseudomonas</taxon>
    </lineage>
</organism>
<reference key="1">
    <citation type="journal article" date="2006" name="Nat. Biotechnol.">
        <title>Complete genome sequence of the entomopathogenic and metabolically versatile soil bacterium Pseudomonas entomophila.</title>
        <authorList>
            <person name="Vodovar N."/>
            <person name="Vallenet D."/>
            <person name="Cruveiller S."/>
            <person name="Rouy Z."/>
            <person name="Barbe V."/>
            <person name="Acosta C."/>
            <person name="Cattolico L."/>
            <person name="Jubin C."/>
            <person name="Lajus A."/>
            <person name="Segurens B."/>
            <person name="Vacherie B."/>
            <person name="Wincker P."/>
            <person name="Weissenbach J."/>
            <person name="Lemaitre B."/>
            <person name="Medigue C."/>
            <person name="Boccard F."/>
        </authorList>
    </citation>
    <scope>NUCLEOTIDE SEQUENCE [LARGE SCALE GENOMIC DNA]</scope>
    <source>
        <strain>L48</strain>
    </source>
</reference>
<gene>
    <name evidence="1" type="primary">hscA</name>
    <name type="ordered locus">PSEEN1014</name>
</gene>
<accession>Q1IEI8</accession>
<keyword id="KW-0067">ATP-binding</keyword>
<keyword id="KW-0143">Chaperone</keyword>
<keyword id="KW-0547">Nucleotide-binding</keyword>
<keyword id="KW-0346">Stress response</keyword>
<protein>
    <recommendedName>
        <fullName evidence="1">Chaperone protein HscA homolog</fullName>
    </recommendedName>
</protein>
<dbReference type="EMBL" id="CT573326">
    <property type="protein sequence ID" value="CAK13917.1"/>
    <property type="molecule type" value="Genomic_DNA"/>
</dbReference>
<dbReference type="RefSeq" id="WP_011532340.1">
    <property type="nucleotide sequence ID" value="NC_008027.1"/>
</dbReference>
<dbReference type="SMR" id="Q1IEI8"/>
<dbReference type="STRING" id="384676.PSEEN1014"/>
<dbReference type="GeneID" id="32804309"/>
<dbReference type="KEGG" id="pen:PSEEN1014"/>
<dbReference type="eggNOG" id="COG0443">
    <property type="taxonomic scope" value="Bacteria"/>
</dbReference>
<dbReference type="HOGENOM" id="CLU_005965_2_1_6"/>
<dbReference type="OrthoDB" id="9766019at2"/>
<dbReference type="Proteomes" id="UP000000658">
    <property type="component" value="Chromosome"/>
</dbReference>
<dbReference type="GO" id="GO:0005524">
    <property type="term" value="F:ATP binding"/>
    <property type="evidence" value="ECO:0007669"/>
    <property type="project" value="UniProtKB-KW"/>
</dbReference>
<dbReference type="GO" id="GO:0016887">
    <property type="term" value="F:ATP hydrolysis activity"/>
    <property type="evidence" value="ECO:0007669"/>
    <property type="project" value="UniProtKB-UniRule"/>
</dbReference>
<dbReference type="GO" id="GO:0140662">
    <property type="term" value="F:ATP-dependent protein folding chaperone"/>
    <property type="evidence" value="ECO:0007669"/>
    <property type="project" value="InterPro"/>
</dbReference>
<dbReference type="GO" id="GO:0051082">
    <property type="term" value="F:unfolded protein binding"/>
    <property type="evidence" value="ECO:0007669"/>
    <property type="project" value="InterPro"/>
</dbReference>
<dbReference type="GO" id="GO:0016226">
    <property type="term" value="P:iron-sulfur cluster assembly"/>
    <property type="evidence" value="ECO:0007669"/>
    <property type="project" value="InterPro"/>
</dbReference>
<dbReference type="CDD" id="cd10236">
    <property type="entry name" value="ASKHA_NBD_HSP70_HscA"/>
    <property type="match status" value="1"/>
</dbReference>
<dbReference type="FunFam" id="3.30.420.40:FF:000046">
    <property type="entry name" value="Chaperone protein HscA"/>
    <property type="match status" value="1"/>
</dbReference>
<dbReference type="FunFam" id="2.60.34.10:FF:000005">
    <property type="entry name" value="Chaperone protein HscA homolog"/>
    <property type="match status" value="1"/>
</dbReference>
<dbReference type="Gene3D" id="1.20.1270.10">
    <property type="match status" value="1"/>
</dbReference>
<dbReference type="Gene3D" id="3.30.420.40">
    <property type="match status" value="2"/>
</dbReference>
<dbReference type="Gene3D" id="3.90.640.10">
    <property type="entry name" value="Actin, Chain A, domain 4"/>
    <property type="match status" value="1"/>
</dbReference>
<dbReference type="Gene3D" id="2.60.34.10">
    <property type="entry name" value="Substrate Binding Domain Of DNAk, Chain A, domain 1"/>
    <property type="match status" value="1"/>
</dbReference>
<dbReference type="HAMAP" id="MF_00679">
    <property type="entry name" value="HscA"/>
    <property type="match status" value="1"/>
</dbReference>
<dbReference type="InterPro" id="IPR043129">
    <property type="entry name" value="ATPase_NBD"/>
</dbReference>
<dbReference type="InterPro" id="IPR018181">
    <property type="entry name" value="Heat_shock_70_CS"/>
</dbReference>
<dbReference type="InterPro" id="IPR042039">
    <property type="entry name" value="HscA_NBD"/>
</dbReference>
<dbReference type="InterPro" id="IPR029048">
    <property type="entry name" value="HSP70_C_sf"/>
</dbReference>
<dbReference type="InterPro" id="IPR029047">
    <property type="entry name" value="HSP70_peptide-bd_sf"/>
</dbReference>
<dbReference type="InterPro" id="IPR013126">
    <property type="entry name" value="Hsp_70_fam"/>
</dbReference>
<dbReference type="InterPro" id="IPR010236">
    <property type="entry name" value="ISC_FeS_clus_asmbl_HscA"/>
</dbReference>
<dbReference type="NCBIfam" id="TIGR01991">
    <property type="entry name" value="HscA"/>
    <property type="match status" value="1"/>
</dbReference>
<dbReference type="NCBIfam" id="NF003520">
    <property type="entry name" value="PRK05183.1"/>
    <property type="match status" value="1"/>
</dbReference>
<dbReference type="PANTHER" id="PTHR19375">
    <property type="entry name" value="HEAT SHOCK PROTEIN 70KDA"/>
    <property type="match status" value="1"/>
</dbReference>
<dbReference type="Pfam" id="PF00012">
    <property type="entry name" value="HSP70"/>
    <property type="match status" value="1"/>
</dbReference>
<dbReference type="PRINTS" id="PR00301">
    <property type="entry name" value="HEATSHOCK70"/>
</dbReference>
<dbReference type="SUPFAM" id="SSF53067">
    <property type="entry name" value="Actin-like ATPase domain"/>
    <property type="match status" value="2"/>
</dbReference>
<dbReference type="SUPFAM" id="SSF100934">
    <property type="entry name" value="Heat shock protein 70kD (HSP70), C-terminal subdomain"/>
    <property type="match status" value="1"/>
</dbReference>
<dbReference type="SUPFAM" id="SSF100920">
    <property type="entry name" value="Heat shock protein 70kD (HSP70), peptide-binding domain"/>
    <property type="match status" value="1"/>
</dbReference>
<dbReference type="PROSITE" id="PS00297">
    <property type="entry name" value="HSP70_1"/>
    <property type="match status" value="1"/>
</dbReference>
<dbReference type="PROSITE" id="PS00329">
    <property type="entry name" value="HSP70_2"/>
    <property type="match status" value="1"/>
</dbReference>
<dbReference type="PROSITE" id="PS01036">
    <property type="entry name" value="HSP70_3"/>
    <property type="match status" value="2"/>
</dbReference>